<reference key="1">
    <citation type="journal article" date="2004" name="Environ. Microbiol.">
        <title>The genome of Desulfotalea psychrophila, a sulfate-reducing bacterium from permanently cold Arctic sediments.</title>
        <authorList>
            <person name="Rabus R."/>
            <person name="Ruepp A."/>
            <person name="Frickey T."/>
            <person name="Rattei T."/>
            <person name="Fartmann B."/>
            <person name="Stark M."/>
            <person name="Bauer M."/>
            <person name="Zibat A."/>
            <person name="Lombardot T."/>
            <person name="Becker I."/>
            <person name="Amann J."/>
            <person name="Gellner K."/>
            <person name="Teeling H."/>
            <person name="Leuschner W.D."/>
            <person name="Gloeckner F.-O."/>
            <person name="Lupas A.N."/>
            <person name="Amann R."/>
            <person name="Klenk H.-P."/>
        </authorList>
    </citation>
    <scope>NUCLEOTIDE SEQUENCE [LARGE SCALE GENOMIC DNA]</scope>
    <source>
        <strain>DSM 12343 / LSv54</strain>
    </source>
</reference>
<sequence>MNSKIEIKPGRLTLAELRRMAKAPVGVRLEEKCKGKINASVQTVGEVIRQGRVIYGINTGFGLLANTIIPNEELEHLQRSLILSHAAGVGAFMADSTVRLMMVLKINSLARGYSGIRLEVIEALVQLLNAEVYPSVPQKGSVGASGDLAPLAHMSIVLLGEGEASYRGQRLSGREGLELAGLSPITLGPKEGLALLNGTQASTAFALQGLFAAEELFATAMVSGSLSLDAALGSRRPFNPLIHAVRGHKSQIDVAASYRQLLEHSEIERSHKFCEAVQDPYSLRCQPQVMGACLNQIRNAAEVIGTEANAVSDNPLVFCKENDIISGGNFHAEPIAMVADNLALAIAEIGALPERRTALLIDSHMSGLPPFLVDKGGLNSGFMIAQVTAAALASENKSLAHPASVDSLPTSANQEDHVSMATFAARRLLEMADNTAGILAIELLAACQGIDFRAPLKTSPLLEEAKSIVRQVVAFYDQDRYLAPDIKNAQALVQAGAFNHLVSRDLLPSFNR</sequence>
<protein>
    <recommendedName>
        <fullName evidence="1">Histidine ammonia-lyase</fullName>
        <shortName evidence="1">Histidase</shortName>
        <ecNumber evidence="1">4.3.1.3</ecNumber>
    </recommendedName>
</protein>
<keyword id="KW-0963">Cytoplasm</keyword>
<keyword id="KW-0369">Histidine metabolism</keyword>
<keyword id="KW-0456">Lyase</keyword>
<keyword id="KW-1185">Reference proteome</keyword>
<dbReference type="EC" id="4.3.1.3" evidence="1"/>
<dbReference type="EMBL" id="CR522870">
    <property type="protein sequence ID" value="CAG37082.1"/>
    <property type="molecule type" value="Genomic_DNA"/>
</dbReference>
<dbReference type="RefSeq" id="WP_011189594.1">
    <property type="nucleotide sequence ID" value="NC_006138.1"/>
</dbReference>
<dbReference type="SMR" id="Q6AKP3"/>
<dbReference type="STRING" id="177439.DP2353"/>
<dbReference type="KEGG" id="dps:DP2353"/>
<dbReference type="eggNOG" id="COG2986">
    <property type="taxonomic scope" value="Bacteria"/>
</dbReference>
<dbReference type="HOGENOM" id="CLU_014801_4_0_7"/>
<dbReference type="OrthoDB" id="9806955at2"/>
<dbReference type="UniPathway" id="UPA00379">
    <property type="reaction ID" value="UER00549"/>
</dbReference>
<dbReference type="Proteomes" id="UP000000602">
    <property type="component" value="Chromosome"/>
</dbReference>
<dbReference type="GO" id="GO:0005737">
    <property type="term" value="C:cytoplasm"/>
    <property type="evidence" value="ECO:0007669"/>
    <property type="project" value="UniProtKB-SubCell"/>
</dbReference>
<dbReference type="GO" id="GO:0004397">
    <property type="term" value="F:histidine ammonia-lyase activity"/>
    <property type="evidence" value="ECO:0007669"/>
    <property type="project" value="UniProtKB-UniRule"/>
</dbReference>
<dbReference type="GO" id="GO:0019556">
    <property type="term" value="P:L-histidine catabolic process to glutamate and formamide"/>
    <property type="evidence" value="ECO:0007669"/>
    <property type="project" value="UniProtKB-UniPathway"/>
</dbReference>
<dbReference type="GO" id="GO:0019557">
    <property type="term" value="P:L-histidine catabolic process to glutamate and formate"/>
    <property type="evidence" value="ECO:0007669"/>
    <property type="project" value="UniProtKB-UniPathway"/>
</dbReference>
<dbReference type="CDD" id="cd00332">
    <property type="entry name" value="PAL-HAL"/>
    <property type="match status" value="1"/>
</dbReference>
<dbReference type="FunFam" id="1.10.275.10:FF:000005">
    <property type="entry name" value="Histidine ammonia-lyase"/>
    <property type="match status" value="1"/>
</dbReference>
<dbReference type="FunFam" id="1.20.200.10:FF:000003">
    <property type="entry name" value="Histidine ammonia-lyase"/>
    <property type="match status" value="1"/>
</dbReference>
<dbReference type="Gene3D" id="1.20.200.10">
    <property type="entry name" value="Fumarase/aspartase (Central domain)"/>
    <property type="match status" value="1"/>
</dbReference>
<dbReference type="Gene3D" id="1.10.275.10">
    <property type="entry name" value="Fumarase/aspartase (N-terminal domain)"/>
    <property type="match status" value="1"/>
</dbReference>
<dbReference type="HAMAP" id="MF_00229">
    <property type="entry name" value="His_ammonia_lyase"/>
    <property type="match status" value="1"/>
</dbReference>
<dbReference type="InterPro" id="IPR001106">
    <property type="entry name" value="Aromatic_Lyase"/>
</dbReference>
<dbReference type="InterPro" id="IPR024083">
    <property type="entry name" value="Fumarase/histidase_N"/>
</dbReference>
<dbReference type="InterPro" id="IPR005921">
    <property type="entry name" value="HutH"/>
</dbReference>
<dbReference type="InterPro" id="IPR008948">
    <property type="entry name" value="L-Aspartase-like"/>
</dbReference>
<dbReference type="InterPro" id="IPR022313">
    <property type="entry name" value="Phe/His_NH3-lyase_AS"/>
</dbReference>
<dbReference type="NCBIfam" id="TIGR01225">
    <property type="entry name" value="hutH"/>
    <property type="match status" value="1"/>
</dbReference>
<dbReference type="NCBIfam" id="NF006871">
    <property type="entry name" value="PRK09367.1"/>
    <property type="match status" value="1"/>
</dbReference>
<dbReference type="PANTHER" id="PTHR10362">
    <property type="entry name" value="HISTIDINE AMMONIA-LYASE"/>
    <property type="match status" value="1"/>
</dbReference>
<dbReference type="Pfam" id="PF00221">
    <property type="entry name" value="Lyase_aromatic"/>
    <property type="match status" value="1"/>
</dbReference>
<dbReference type="SUPFAM" id="SSF48557">
    <property type="entry name" value="L-aspartase-like"/>
    <property type="match status" value="1"/>
</dbReference>
<dbReference type="PROSITE" id="PS00488">
    <property type="entry name" value="PAL_HISTIDASE"/>
    <property type="match status" value="1"/>
</dbReference>
<proteinExistence type="inferred from homology"/>
<comment type="catalytic activity">
    <reaction evidence="1">
        <text>L-histidine = trans-urocanate + NH4(+)</text>
        <dbReference type="Rhea" id="RHEA:21232"/>
        <dbReference type="ChEBI" id="CHEBI:17771"/>
        <dbReference type="ChEBI" id="CHEBI:28938"/>
        <dbReference type="ChEBI" id="CHEBI:57595"/>
        <dbReference type="EC" id="4.3.1.3"/>
    </reaction>
</comment>
<comment type="pathway">
    <text evidence="1">Amino-acid degradation; L-histidine degradation into L-glutamate; N-formimidoyl-L-glutamate from L-histidine: step 1/3.</text>
</comment>
<comment type="subcellular location">
    <subcellularLocation>
        <location evidence="1">Cytoplasm</location>
    </subcellularLocation>
</comment>
<comment type="PTM">
    <text evidence="1">Contains an active site 4-methylidene-imidazol-5-one (MIO), which is formed autocatalytically by cyclization and dehydration of residues Ala-Ser-Gly.</text>
</comment>
<comment type="similarity">
    <text evidence="1">Belongs to the PAL/histidase family.</text>
</comment>
<feature type="chain" id="PRO_0000161003" description="Histidine ammonia-lyase">
    <location>
        <begin position="1"/>
        <end position="512"/>
    </location>
</feature>
<feature type="modified residue" description="2,3-didehydroalanine (Ser)" evidence="1">
    <location>
        <position position="145"/>
    </location>
</feature>
<feature type="cross-link" description="5-imidazolinone (Ala-Gly)" evidence="1">
    <location>
        <begin position="144"/>
        <end position="146"/>
    </location>
</feature>
<evidence type="ECO:0000255" key="1">
    <source>
        <dbReference type="HAMAP-Rule" id="MF_00229"/>
    </source>
</evidence>
<gene>
    <name evidence="1" type="primary">hutH</name>
    <name type="ordered locus">DP2353</name>
</gene>
<name>HUTH_DESPS</name>
<accession>Q6AKP3</accession>
<organism>
    <name type="scientific">Desulfotalea psychrophila (strain LSv54 / DSM 12343)</name>
    <dbReference type="NCBI Taxonomy" id="177439"/>
    <lineage>
        <taxon>Bacteria</taxon>
        <taxon>Pseudomonadati</taxon>
        <taxon>Thermodesulfobacteriota</taxon>
        <taxon>Desulfobulbia</taxon>
        <taxon>Desulfobulbales</taxon>
        <taxon>Desulfocapsaceae</taxon>
        <taxon>Desulfotalea</taxon>
    </lineage>
</organism>